<organism>
    <name type="scientific">Flavobacterium johnsoniae (strain ATCC 17061 / DSM 2064 / JCM 8514 / BCRC 14874 / CCUG 350202 / NBRC 14942 / NCIMB 11054 / UW101)</name>
    <name type="common">Cytophaga johnsonae</name>
    <dbReference type="NCBI Taxonomy" id="376686"/>
    <lineage>
        <taxon>Bacteria</taxon>
        <taxon>Pseudomonadati</taxon>
        <taxon>Bacteroidota</taxon>
        <taxon>Flavobacteriia</taxon>
        <taxon>Flavobacteriales</taxon>
        <taxon>Flavobacteriaceae</taxon>
        <taxon>Flavobacterium</taxon>
    </lineage>
</organism>
<accession>A5FN03</accession>
<dbReference type="EMBL" id="CP000685">
    <property type="protein sequence ID" value="ABQ03415.1"/>
    <property type="molecule type" value="Genomic_DNA"/>
</dbReference>
<dbReference type="RefSeq" id="WP_012022481.1">
    <property type="nucleotide sequence ID" value="NZ_MUGZ01000005.1"/>
</dbReference>
<dbReference type="SMR" id="A5FN03"/>
<dbReference type="STRING" id="376686.Fjoh_0379"/>
<dbReference type="KEGG" id="fjo:Fjoh_0379"/>
<dbReference type="eggNOG" id="COG1841">
    <property type="taxonomic scope" value="Bacteria"/>
</dbReference>
<dbReference type="HOGENOM" id="CLU_131047_1_1_10"/>
<dbReference type="OrthoDB" id="9812790at2"/>
<dbReference type="Proteomes" id="UP000006694">
    <property type="component" value="Chromosome"/>
</dbReference>
<dbReference type="GO" id="GO:0022625">
    <property type="term" value="C:cytosolic large ribosomal subunit"/>
    <property type="evidence" value="ECO:0007669"/>
    <property type="project" value="TreeGrafter"/>
</dbReference>
<dbReference type="GO" id="GO:0003735">
    <property type="term" value="F:structural constituent of ribosome"/>
    <property type="evidence" value="ECO:0007669"/>
    <property type="project" value="InterPro"/>
</dbReference>
<dbReference type="GO" id="GO:0006412">
    <property type="term" value="P:translation"/>
    <property type="evidence" value="ECO:0007669"/>
    <property type="project" value="UniProtKB-UniRule"/>
</dbReference>
<dbReference type="CDD" id="cd01658">
    <property type="entry name" value="Ribosomal_L30"/>
    <property type="match status" value="1"/>
</dbReference>
<dbReference type="Gene3D" id="3.30.1390.20">
    <property type="entry name" value="Ribosomal protein L30, ferredoxin-like fold domain"/>
    <property type="match status" value="1"/>
</dbReference>
<dbReference type="HAMAP" id="MF_01371_B">
    <property type="entry name" value="Ribosomal_uL30_B"/>
    <property type="match status" value="1"/>
</dbReference>
<dbReference type="InterPro" id="IPR036919">
    <property type="entry name" value="Ribo_uL30_ferredoxin-like_sf"/>
</dbReference>
<dbReference type="InterPro" id="IPR005996">
    <property type="entry name" value="Ribosomal_uL30_bac-type"/>
</dbReference>
<dbReference type="InterPro" id="IPR016082">
    <property type="entry name" value="Ribosomal_uL30_ferredoxin-like"/>
</dbReference>
<dbReference type="NCBIfam" id="TIGR01308">
    <property type="entry name" value="rpmD_bact"/>
    <property type="match status" value="1"/>
</dbReference>
<dbReference type="PANTHER" id="PTHR15892:SF2">
    <property type="entry name" value="LARGE RIBOSOMAL SUBUNIT PROTEIN UL30M"/>
    <property type="match status" value="1"/>
</dbReference>
<dbReference type="PANTHER" id="PTHR15892">
    <property type="entry name" value="MITOCHONDRIAL RIBOSOMAL PROTEIN L30"/>
    <property type="match status" value="1"/>
</dbReference>
<dbReference type="Pfam" id="PF00327">
    <property type="entry name" value="Ribosomal_L30"/>
    <property type="match status" value="1"/>
</dbReference>
<dbReference type="PIRSF" id="PIRSF002211">
    <property type="entry name" value="Ribosomal_L30_bac-type"/>
    <property type="match status" value="1"/>
</dbReference>
<dbReference type="SUPFAM" id="SSF55129">
    <property type="entry name" value="Ribosomal protein L30p/L7e"/>
    <property type="match status" value="1"/>
</dbReference>
<sequence>MAKLLVKQVRSKINCPLSQKRGLEALGLRKLGQVVEHESNPAILGMINKVKHLVSVEEAK</sequence>
<proteinExistence type="inferred from homology"/>
<keyword id="KW-0687">Ribonucleoprotein</keyword>
<keyword id="KW-0689">Ribosomal protein</keyword>
<comment type="subunit">
    <text evidence="1">Part of the 50S ribosomal subunit.</text>
</comment>
<comment type="similarity">
    <text evidence="1">Belongs to the universal ribosomal protein uL30 family.</text>
</comment>
<name>RL30_FLAJ1</name>
<feature type="chain" id="PRO_1000087251" description="Large ribosomal subunit protein uL30">
    <location>
        <begin position="1"/>
        <end position="60"/>
    </location>
</feature>
<protein>
    <recommendedName>
        <fullName evidence="1">Large ribosomal subunit protein uL30</fullName>
    </recommendedName>
    <alternativeName>
        <fullName evidence="2">50S ribosomal protein L30</fullName>
    </alternativeName>
</protein>
<evidence type="ECO:0000255" key="1">
    <source>
        <dbReference type="HAMAP-Rule" id="MF_01371"/>
    </source>
</evidence>
<evidence type="ECO:0000305" key="2"/>
<gene>
    <name evidence="1" type="primary">rpmD</name>
    <name type="ordered locus">Fjoh_0379</name>
</gene>
<reference key="1">
    <citation type="journal article" date="2009" name="Appl. Environ. Microbiol.">
        <title>Novel features of the polysaccharide-digesting gliding bacterium Flavobacterium johnsoniae as revealed by genome sequence analysis.</title>
        <authorList>
            <person name="McBride M.J."/>
            <person name="Xie G."/>
            <person name="Martens E.C."/>
            <person name="Lapidus A."/>
            <person name="Henrissat B."/>
            <person name="Rhodes R.G."/>
            <person name="Goltsman E."/>
            <person name="Wang W."/>
            <person name="Xu J."/>
            <person name="Hunnicutt D.W."/>
            <person name="Staroscik A.M."/>
            <person name="Hoover T.R."/>
            <person name="Cheng Y.Q."/>
            <person name="Stein J.L."/>
        </authorList>
    </citation>
    <scope>NUCLEOTIDE SEQUENCE [LARGE SCALE GENOMIC DNA]</scope>
    <source>
        <strain>ATCC 17061 / DSM 2064 / JCM 8514 / BCRC 14874 / CCUG 350202 / NBRC 14942 / NCIMB 11054 / UW101</strain>
    </source>
</reference>